<reference key="1">
    <citation type="journal article" date="2004" name="Proc. Natl. Acad. Sci. U.S.A.">
        <title>Genomic analysis of Bacteroides fragilis reveals extensive DNA inversions regulating cell surface adaptation.</title>
        <authorList>
            <person name="Kuwahara T."/>
            <person name="Yamashita A."/>
            <person name="Hirakawa H."/>
            <person name="Nakayama H."/>
            <person name="Toh H."/>
            <person name="Okada N."/>
            <person name="Kuhara S."/>
            <person name="Hattori M."/>
            <person name="Hayashi T."/>
            <person name="Ohnishi Y."/>
        </authorList>
    </citation>
    <scope>NUCLEOTIDE SEQUENCE [LARGE SCALE GENOMIC DNA]</scope>
    <source>
        <strain>YCH46</strain>
    </source>
</reference>
<proteinExistence type="inferred from homology"/>
<keyword id="KW-0378">Hydrolase</keyword>
<dbReference type="EC" id="3.5.1.2" evidence="1"/>
<dbReference type="EMBL" id="AP006841">
    <property type="protein sequence ID" value="BAD47204.1"/>
    <property type="molecule type" value="Genomic_DNA"/>
</dbReference>
<dbReference type="RefSeq" id="WP_011202007.1">
    <property type="nucleotide sequence ID" value="NC_006347.1"/>
</dbReference>
<dbReference type="RefSeq" id="YP_097738.1">
    <property type="nucleotide sequence ID" value="NC_006347.1"/>
</dbReference>
<dbReference type="SMR" id="Q64Z72"/>
<dbReference type="STRING" id="295405.BF0455"/>
<dbReference type="KEGG" id="bfr:BF0455"/>
<dbReference type="PATRIC" id="fig|295405.11.peg.471"/>
<dbReference type="HOGENOM" id="CLU_027932_1_0_10"/>
<dbReference type="OrthoDB" id="9788822at2"/>
<dbReference type="Proteomes" id="UP000002197">
    <property type="component" value="Chromosome"/>
</dbReference>
<dbReference type="GO" id="GO:0004359">
    <property type="term" value="F:glutaminase activity"/>
    <property type="evidence" value="ECO:0007669"/>
    <property type="project" value="UniProtKB-UniRule"/>
</dbReference>
<dbReference type="GO" id="GO:0006537">
    <property type="term" value="P:glutamate biosynthetic process"/>
    <property type="evidence" value="ECO:0007669"/>
    <property type="project" value="TreeGrafter"/>
</dbReference>
<dbReference type="GO" id="GO:0006543">
    <property type="term" value="P:glutamine catabolic process"/>
    <property type="evidence" value="ECO:0007669"/>
    <property type="project" value="TreeGrafter"/>
</dbReference>
<dbReference type="Gene3D" id="3.40.710.10">
    <property type="entry name" value="DD-peptidase/beta-lactamase superfamily"/>
    <property type="match status" value="1"/>
</dbReference>
<dbReference type="HAMAP" id="MF_00313">
    <property type="entry name" value="Glutaminase"/>
    <property type="match status" value="1"/>
</dbReference>
<dbReference type="InterPro" id="IPR012338">
    <property type="entry name" value="Beta-lactam/transpept-like"/>
</dbReference>
<dbReference type="InterPro" id="IPR015868">
    <property type="entry name" value="Glutaminase"/>
</dbReference>
<dbReference type="NCBIfam" id="TIGR03814">
    <property type="entry name" value="Gln_ase"/>
    <property type="match status" value="1"/>
</dbReference>
<dbReference type="NCBIfam" id="NF009020">
    <property type="entry name" value="PRK12356.1"/>
    <property type="match status" value="1"/>
</dbReference>
<dbReference type="PANTHER" id="PTHR12544">
    <property type="entry name" value="GLUTAMINASE"/>
    <property type="match status" value="1"/>
</dbReference>
<dbReference type="PANTHER" id="PTHR12544:SF48">
    <property type="entry name" value="GLUTAMINASE 1"/>
    <property type="match status" value="1"/>
</dbReference>
<dbReference type="Pfam" id="PF04960">
    <property type="entry name" value="Glutaminase"/>
    <property type="match status" value="1"/>
</dbReference>
<dbReference type="SUPFAM" id="SSF56601">
    <property type="entry name" value="beta-lactamase/transpeptidase-like"/>
    <property type="match status" value="1"/>
</dbReference>
<evidence type="ECO:0000255" key="1">
    <source>
        <dbReference type="HAMAP-Rule" id="MF_00313"/>
    </source>
</evidence>
<protein>
    <recommendedName>
        <fullName evidence="1">Glutaminase</fullName>
        <ecNumber evidence="1">3.5.1.2</ecNumber>
    </recommendedName>
</protein>
<accession>Q64Z72</accession>
<gene>
    <name evidence="1" type="primary">glsA</name>
    <name type="ordered locus">BF0455</name>
</gene>
<organism>
    <name type="scientific">Bacteroides fragilis (strain YCH46)</name>
    <dbReference type="NCBI Taxonomy" id="295405"/>
    <lineage>
        <taxon>Bacteria</taxon>
        <taxon>Pseudomonadati</taxon>
        <taxon>Bacteroidota</taxon>
        <taxon>Bacteroidia</taxon>
        <taxon>Bacteroidales</taxon>
        <taxon>Bacteroidaceae</taxon>
        <taxon>Bacteroides</taxon>
    </lineage>
</organism>
<sequence>MDKKISISQIKEVVQQAYEQVKGNTGGKNADYIPYLANIDKNLFGISVCLLNGQTITVGDFDYRFGIESVSKVHTAILILRQYGAQKVLEMIGADATGLPFNSIIAILLENDHPSTPLVNAGAISACSMVTPIGNSDKKWDAIVQNITDLCGSAPQLIEELYKSETATNFNNRSIAWLLKNYNRIYDDPNMSLDLYTRQCSLGVTAQMLSVAAGTVANGGVNPVTKKQVFDSELTPKITSMIATVGFYEHSGDWMYTSGIPAKTGVGGGVMGVLPGVFGVSAFAPPLDGSGNSVKAQLAIKYIMNKLGLNVFNGARVTIVD</sequence>
<feature type="chain" id="PRO_1000048324" description="Glutaminase">
    <location>
        <begin position="1"/>
        <end position="321"/>
    </location>
</feature>
<feature type="binding site" evidence="1">
    <location>
        <position position="69"/>
    </location>
    <ligand>
        <name>substrate</name>
    </ligand>
</feature>
<feature type="binding site" evidence="1">
    <location>
        <position position="120"/>
    </location>
    <ligand>
        <name>substrate</name>
    </ligand>
</feature>
<feature type="binding site" evidence="1">
    <location>
        <position position="165"/>
    </location>
    <ligand>
        <name>substrate</name>
    </ligand>
</feature>
<feature type="binding site" evidence="1">
    <location>
        <position position="172"/>
    </location>
    <ligand>
        <name>substrate</name>
    </ligand>
</feature>
<feature type="binding site" evidence="1">
    <location>
        <position position="196"/>
    </location>
    <ligand>
        <name>substrate</name>
    </ligand>
</feature>
<feature type="binding site" evidence="1">
    <location>
        <position position="248"/>
    </location>
    <ligand>
        <name>substrate</name>
    </ligand>
</feature>
<feature type="binding site" evidence="1">
    <location>
        <position position="266"/>
    </location>
    <ligand>
        <name>substrate</name>
    </ligand>
</feature>
<comment type="catalytic activity">
    <reaction evidence="1">
        <text>L-glutamine + H2O = L-glutamate + NH4(+)</text>
        <dbReference type="Rhea" id="RHEA:15889"/>
        <dbReference type="ChEBI" id="CHEBI:15377"/>
        <dbReference type="ChEBI" id="CHEBI:28938"/>
        <dbReference type="ChEBI" id="CHEBI:29985"/>
        <dbReference type="ChEBI" id="CHEBI:58359"/>
        <dbReference type="EC" id="3.5.1.2"/>
    </reaction>
</comment>
<comment type="subunit">
    <text evidence="1">Homotetramer.</text>
</comment>
<comment type="similarity">
    <text evidence="1">Belongs to the glutaminase family.</text>
</comment>
<name>GLSA_BACFR</name>